<accession>B4TDG1</accession>
<proteinExistence type="inferred from homology"/>
<sequence>MPRGLELLIAQTILQGFDAQYGRFLEVTSGAQQRFEQADWHAVQQAMKSRIHLYDHHVGLVVEQLRCITDGKSTDADFLLRVKEHYTRLLPDYPRFEIAESFFNSVYCRLFDHRSLTPERLFIFSSQPERRFRTIPRPLAKDFFPDHGWETLLMRMLSDLPLRLPWQNKSRDIRYIIAHLTETLGEDALPRCHVQVANELFYRNKAAWLVGKLTTPDGTLPFLLPIHRTDEGELFVDTCLTTTAEASIVFGFARSYFMVYAPLPAALVEWLREILPGKTTAELYMAIGCQKHAKTESYREYLCYLTESDEKFIEAPGIRGMVMLVFTLPGFDRVFKIIKDKFAPQKEMSAAHVRACYQLVKEHDRVGRMADTQEFENFVLDKRQIDPALMALLRQEVPEKITDLGEHIVIRHLYIERRMVPLNIWLEQVEGQQLRDAIEEYGNAIRQLAAANIFPGDMLFKNFGVTRHGRVVFYDYDEICYMTEVNFRDIPPARYPEDELASEPWYSVSPGDVFPEEFRHWLCADPRIGPLFEEMHADLFRADYWRALQTRIKEGHVEDVYAYRRRQRFSVRYGAISSTANSS</sequence>
<reference key="1">
    <citation type="journal article" date="2011" name="J. Bacteriol.">
        <title>Comparative genomics of 28 Salmonella enterica isolates: evidence for CRISPR-mediated adaptive sublineage evolution.</title>
        <authorList>
            <person name="Fricke W.F."/>
            <person name="Mammel M.K."/>
            <person name="McDermott P.F."/>
            <person name="Tartera C."/>
            <person name="White D.G."/>
            <person name="Leclerc J.E."/>
            <person name="Ravel J."/>
            <person name="Cebula T.A."/>
        </authorList>
    </citation>
    <scope>NUCLEOTIDE SEQUENCE [LARGE SCALE GENOMIC DNA]</scope>
    <source>
        <strain>SL476</strain>
    </source>
</reference>
<feature type="chain" id="PRO_1000133281" description="Isocitrate dehydrogenase kinase/phosphatase">
    <location>
        <begin position="1"/>
        <end position="583"/>
    </location>
</feature>
<feature type="active site" evidence="1">
    <location>
        <position position="371"/>
    </location>
</feature>
<feature type="binding site" evidence="1">
    <location>
        <begin position="315"/>
        <end position="321"/>
    </location>
    <ligand>
        <name>ATP</name>
        <dbReference type="ChEBI" id="CHEBI:30616"/>
    </ligand>
</feature>
<feature type="binding site" evidence="1">
    <location>
        <position position="336"/>
    </location>
    <ligand>
        <name>ATP</name>
        <dbReference type="ChEBI" id="CHEBI:30616"/>
    </ligand>
</feature>
<dbReference type="EC" id="2.7.11.5" evidence="1"/>
<dbReference type="EC" id="3.1.3.-" evidence="1"/>
<dbReference type="EMBL" id="CP001120">
    <property type="protein sequence ID" value="ACF66516.1"/>
    <property type="molecule type" value="Genomic_DNA"/>
</dbReference>
<dbReference type="RefSeq" id="WP_001137278.1">
    <property type="nucleotide sequence ID" value="NC_011083.1"/>
</dbReference>
<dbReference type="SMR" id="B4TDG1"/>
<dbReference type="KEGG" id="seh:SeHA_C4519"/>
<dbReference type="HOGENOM" id="CLU_033804_1_1_6"/>
<dbReference type="Proteomes" id="UP000001866">
    <property type="component" value="Chromosome"/>
</dbReference>
<dbReference type="GO" id="GO:0005737">
    <property type="term" value="C:cytoplasm"/>
    <property type="evidence" value="ECO:0007669"/>
    <property type="project" value="UniProtKB-SubCell"/>
</dbReference>
<dbReference type="GO" id="GO:0008772">
    <property type="term" value="F:[isocitrate dehydrogenase (NADP+)] kinase activity"/>
    <property type="evidence" value="ECO:0007669"/>
    <property type="project" value="UniProtKB-UniRule"/>
</dbReference>
<dbReference type="GO" id="GO:0016208">
    <property type="term" value="F:AMP binding"/>
    <property type="evidence" value="ECO:0007669"/>
    <property type="project" value="TreeGrafter"/>
</dbReference>
<dbReference type="GO" id="GO:0005524">
    <property type="term" value="F:ATP binding"/>
    <property type="evidence" value="ECO:0007669"/>
    <property type="project" value="UniProtKB-UniRule"/>
</dbReference>
<dbReference type="GO" id="GO:0004721">
    <property type="term" value="F:phosphoprotein phosphatase activity"/>
    <property type="evidence" value="ECO:0007669"/>
    <property type="project" value="UniProtKB-KW"/>
</dbReference>
<dbReference type="GO" id="GO:0004674">
    <property type="term" value="F:protein serine/threonine kinase activity"/>
    <property type="evidence" value="ECO:0007669"/>
    <property type="project" value="UniProtKB-KW"/>
</dbReference>
<dbReference type="GO" id="GO:0006006">
    <property type="term" value="P:glucose metabolic process"/>
    <property type="evidence" value="ECO:0007669"/>
    <property type="project" value="InterPro"/>
</dbReference>
<dbReference type="GO" id="GO:0006097">
    <property type="term" value="P:glyoxylate cycle"/>
    <property type="evidence" value="ECO:0007669"/>
    <property type="project" value="UniProtKB-UniRule"/>
</dbReference>
<dbReference type="GO" id="GO:0006099">
    <property type="term" value="P:tricarboxylic acid cycle"/>
    <property type="evidence" value="ECO:0007669"/>
    <property type="project" value="UniProtKB-UniRule"/>
</dbReference>
<dbReference type="HAMAP" id="MF_00747">
    <property type="entry name" value="AceK"/>
    <property type="match status" value="1"/>
</dbReference>
<dbReference type="InterPro" id="IPR046855">
    <property type="entry name" value="AceK_kinase"/>
</dbReference>
<dbReference type="InterPro" id="IPR046854">
    <property type="entry name" value="AceK_regulatory"/>
</dbReference>
<dbReference type="InterPro" id="IPR010452">
    <property type="entry name" value="Isocitrate_DH_AceK"/>
</dbReference>
<dbReference type="NCBIfam" id="NF002804">
    <property type="entry name" value="PRK02946.1"/>
    <property type="match status" value="1"/>
</dbReference>
<dbReference type="PANTHER" id="PTHR39559">
    <property type="match status" value="1"/>
</dbReference>
<dbReference type="PANTHER" id="PTHR39559:SF1">
    <property type="entry name" value="ISOCITRATE DEHYDROGENASE KINASE_PHOSPHATASE"/>
    <property type="match status" value="1"/>
</dbReference>
<dbReference type="Pfam" id="PF06315">
    <property type="entry name" value="AceK_kinase"/>
    <property type="match status" value="1"/>
</dbReference>
<dbReference type="Pfam" id="PF20423">
    <property type="entry name" value="AceK_regulatory"/>
    <property type="match status" value="1"/>
</dbReference>
<dbReference type="PIRSF" id="PIRSF000719">
    <property type="entry name" value="AceK"/>
    <property type="match status" value="1"/>
</dbReference>
<comment type="function">
    <text evidence="1">Bifunctional enzyme which can phosphorylate or dephosphorylate isocitrate dehydrogenase (IDH) on a specific serine residue. This is a regulatory mechanism which enables bacteria to bypass the Krebs cycle via the glyoxylate shunt in response to the source of carbon. When bacteria are grown on glucose, IDH is fully active and unphosphorylated, but when grown on acetate or ethanol, the activity of IDH declines drastically concomitant with its phosphorylation.</text>
</comment>
<comment type="catalytic activity">
    <reaction evidence="1">
        <text>L-seryl-[isocitrate dehydrogenase] + ATP = O-phospho-L-seryl-[isocitrate dehydrogenase] + ADP + H(+)</text>
        <dbReference type="Rhea" id="RHEA:43540"/>
        <dbReference type="Rhea" id="RHEA-COMP:10605"/>
        <dbReference type="Rhea" id="RHEA-COMP:10606"/>
        <dbReference type="ChEBI" id="CHEBI:15378"/>
        <dbReference type="ChEBI" id="CHEBI:29999"/>
        <dbReference type="ChEBI" id="CHEBI:30616"/>
        <dbReference type="ChEBI" id="CHEBI:83421"/>
        <dbReference type="ChEBI" id="CHEBI:456216"/>
        <dbReference type="EC" id="2.7.11.5"/>
    </reaction>
</comment>
<comment type="subcellular location">
    <subcellularLocation>
        <location evidence="1">Cytoplasm</location>
    </subcellularLocation>
</comment>
<comment type="similarity">
    <text evidence="1">Belongs to the AceK family.</text>
</comment>
<keyword id="KW-0067">ATP-binding</keyword>
<keyword id="KW-0963">Cytoplasm</keyword>
<keyword id="KW-0329">Glyoxylate bypass</keyword>
<keyword id="KW-0378">Hydrolase</keyword>
<keyword id="KW-0418">Kinase</keyword>
<keyword id="KW-0547">Nucleotide-binding</keyword>
<keyword id="KW-0904">Protein phosphatase</keyword>
<keyword id="KW-0723">Serine/threonine-protein kinase</keyword>
<keyword id="KW-0808">Transferase</keyword>
<keyword id="KW-0816">Tricarboxylic acid cycle</keyword>
<protein>
    <recommendedName>
        <fullName evidence="1">Isocitrate dehydrogenase kinase/phosphatase</fullName>
        <shortName evidence="1">IDH kinase/phosphatase</shortName>
        <shortName evidence="1">IDHK/P</shortName>
        <ecNumber evidence="1">2.7.11.5</ecNumber>
        <ecNumber evidence="1">3.1.3.-</ecNumber>
    </recommendedName>
</protein>
<organism>
    <name type="scientific">Salmonella heidelberg (strain SL476)</name>
    <dbReference type="NCBI Taxonomy" id="454169"/>
    <lineage>
        <taxon>Bacteria</taxon>
        <taxon>Pseudomonadati</taxon>
        <taxon>Pseudomonadota</taxon>
        <taxon>Gammaproteobacteria</taxon>
        <taxon>Enterobacterales</taxon>
        <taxon>Enterobacteriaceae</taxon>
        <taxon>Salmonella</taxon>
    </lineage>
</organism>
<name>ACEK_SALHS</name>
<evidence type="ECO:0000255" key="1">
    <source>
        <dbReference type="HAMAP-Rule" id="MF_00747"/>
    </source>
</evidence>
<gene>
    <name evidence="1" type="primary">aceK</name>
    <name type="ordered locus">SeHA_C4519</name>
</gene>